<evidence type="ECO:0000255" key="1">
    <source>
        <dbReference type="HAMAP-Rule" id="MF_01341"/>
    </source>
</evidence>
<evidence type="ECO:0000256" key="2">
    <source>
        <dbReference type="SAM" id="MobiDB-lite"/>
    </source>
</evidence>
<evidence type="ECO:0000305" key="3"/>
<feature type="chain" id="PRO_1000054538" description="Large ribosomal subunit protein uL15">
    <location>
        <begin position="1"/>
        <end position="144"/>
    </location>
</feature>
<feature type="region of interest" description="Disordered" evidence="2">
    <location>
        <begin position="1"/>
        <end position="49"/>
    </location>
</feature>
<feature type="compositionally biased region" description="Gly residues" evidence="2">
    <location>
        <begin position="21"/>
        <end position="31"/>
    </location>
</feature>
<dbReference type="EMBL" id="CP000447">
    <property type="protein sequence ID" value="ABI70030.1"/>
    <property type="molecule type" value="Genomic_DNA"/>
</dbReference>
<dbReference type="RefSeq" id="WP_011635657.1">
    <property type="nucleotide sequence ID" value="NC_008345.1"/>
</dbReference>
<dbReference type="SMR" id="Q089N5"/>
<dbReference type="STRING" id="318167.Sfri_0167"/>
<dbReference type="KEGG" id="sfr:Sfri_0167"/>
<dbReference type="eggNOG" id="COG0200">
    <property type="taxonomic scope" value="Bacteria"/>
</dbReference>
<dbReference type="HOGENOM" id="CLU_055188_4_2_6"/>
<dbReference type="OrthoDB" id="9810293at2"/>
<dbReference type="Proteomes" id="UP000000684">
    <property type="component" value="Chromosome"/>
</dbReference>
<dbReference type="GO" id="GO:0022625">
    <property type="term" value="C:cytosolic large ribosomal subunit"/>
    <property type="evidence" value="ECO:0007669"/>
    <property type="project" value="TreeGrafter"/>
</dbReference>
<dbReference type="GO" id="GO:0019843">
    <property type="term" value="F:rRNA binding"/>
    <property type="evidence" value="ECO:0007669"/>
    <property type="project" value="UniProtKB-UniRule"/>
</dbReference>
<dbReference type="GO" id="GO:0003735">
    <property type="term" value="F:structural constituent of ribosome"/>
    <property type="evidence" value="ECO:0007669"/>
    <property type="project" value="InterPro"/>
</dbReference>
<dbReference type="GO" id="GO:0006412">
    <property type="term" value="P:translation"/>
    <property type="evidence" value="ECO:0007669"/>
    <property type="project" value="UniProtKB-UniRule"/>
</dbReference>
<dbReference type="FunFam" id="3.100.10.10:FF:000003">
    <property type="entry name" value="50S ribosomal protein L15"/>
    <property type="match status" value="1"/>
</dbReference>
<dbReference type="Gene3D" id="3.100.10.10">
    <property type="match status" value="1"/>
</dbReference>
<dbReference type="HAMAP" id="MF_01341">
    <property type="entry name" value="Ribosomal_uL15"/>
    <property type="match status" value="1"/>
</dbReference>
<dbReference type="InterPro" id="IPR030878">
    <property type="entry name" value="Ribosomal_uL15"/>
</dbReference>
<dbReference type="InterPro" id="IPR021131">
    <property type="entry name" value="Ribosomal_uL15/eL18"/>
</dbReference>
<dbReference type="InterPro" id="IPR036227">
    <property type="entry name" value="Ribosomal_uL15/eL18_sf"/>
</dbReference>
<dbReference type="InterPro" id="IPR005749">
    <property type="entry name" value="Ribosomal_uL15_bac-type"/>
</dbReference>
<dbReference type="InterPro" id="IPR001196">
    <property type="entry name" value="Ribosomal_uL15_CS"/>
</dbReference>
<dbReference type="NCBIfam" id="TIGR01071">
    <property type="entry name" value="rplO_bact"/>
    <property type="match status" value="1"/>
</dbReference>
<dbReference type="PANTHER" id="PTHR12934">
    <property type="entry name" value="50S RIBOSOMAL PROTEIN L15"/>
    <property type="match status" value="1"/>
</dbReference>
<dbReference type="PANTHER" id="PTHR12934:SF11">
    <property type="entry name" value="LARGE RIBOSOMAL SUBUNIT PROTEIN UL15M"/>
    <property type="match status" value="1"/>
</dbReference>
<dbReference type="Pfam" id="PF00828">
    <property type="entry name" value="Ribosomal_L27A"/>
    <property type="match status" value="1"/>
</dbReference>
<dbReference type="SUPFAM" id="SSF52080">
    <property type="entry name" value="Ribosomal proteins L15p and L18e"/>
    <property type="match status" value="1"/>
</dbReference>
<dbReference type="PROSITE" id="PS00475">
    <property type="entry name" value="RIBOSOMAL_L15"/>
    <property type="match status" value="1"/>
</dbReference>
<sequence length="144" mass="14999">MRLNTLSPAAGSKSAPKRVGRGIGSGLGKTAGRGHKGQKSRSGGGVRVGFEGGQMPLKIRLPKFGFTSRRALVTAEVRLLELAKVNGDVVDLNALKDANVITRNIQFAKIVLSGTIDRPVTVKGLKVTKGARAAIEAAGGKIEE</sequence>
<keyword id="KW-1185">Reference proteome</keyword>
<keyword id="KW-0687">Ribonucleoprotein</keyword>
<keyword id="KW-0689">Ribosomal protein</keyword>
<keyword id="KW-0694">RNA-binding</keyword>
<keyword id="KW-0699">rRNA-binding</keyword>
<name>RL15_SHEFN</name>
<comment type="function">
    <text evidence="1">Binds to the 23S rRNA.</text>
</comment>
<comment type="subunit">
    <text evidence="1">Part of the 50S ribosomal subunit.</text>
</comment>
<comment type="similarity">
    <text evidence="1">Belongs to the universal ribosomal protein uL15 family.</text>
</comment>
<gene>
    <name evidence="1" type="primary">rplO</name>
    <name type="ordered locus">Sfri_0167</name>
</gene>
<protein>
    <recommendedName>
        <fullName evidence="1">Large ribosomal subunit protein uL15</fullName>
    </recommendedName>
    <alternativeName>
        <fullName evidence="3">50S ribosomal protein L15</fullName>
    </alternativeName>
</protein>
<organism>
    <name type="scientific">Shewanella frigidimarina (strain NCIMB 400)</name>
    <dbReference type="NCBI Taxonomy" id="318167"/>
    <lineage>
        <taxon>Bacteria</taxon>
        <taxon>Pseudomonadati</taxon>
        <taxon>Pseudomonadota</taxon>
        <taxon>Gammaproteobacteria</taxon>
        <taxon>Alteromonadales</taxon>
        <taxon>Shewanellaceae</taxon>
        <taxon>Shewanella</taxon>
    </lineage>
</organism>
<reference key="1">
    <citation type="submission" date="2006-08" db="EMBL/GenBank/DDBJ databases">
        <title>Complete sequence of Shewanella frigidimarina NCIMB 400.</title>
        <authorList>
            <consortium name="US DOE Joint Genome Institute"/>
            <person name="Copeland A."/>
            <person name="Lucas S."/>
            <person name="Lapidus A."/>
            <person name="Barry K."/>
            <person name="Detter J.C."/>
            <person name="Glavina del Rio T."/>
            <person name="Hammon N."/>
            <person name="Israni S."/>
            <person name="Dalin E."/>
            <person name="Tice H."/>
            <person name="Pitluck S."/>
            <person name="Fredrickson J.K."/>
            <person name="Kolker E."/>
            <person name="McCuel L.A."/>
            <person name="DiChristina T."/>
            <person name="Nealson K.H."/>
            <person name="Newman D."/>
            <person name="Tiedje J.M."/>
            <person name="Zhou J."/>
            <person name="Romine M.F."/>
            <person name="Culley D.E."/>
            <person name="Serres M."/>
            <person name="Chertkov O."/>
            <person name="Brettin T."/>
            <person name="Bruce D."/>
            <person name="Han C."/>
            <person name="Tapia R."/>
            <person name="Gilna P."/>
            <person name="Schmutz J."/>
            <person name="Larimer F."/>
            <person name="Land M."/>
            <person name="Hauser L."/>
            <person name="Kyrpides N."/>
            <person name="Mikhailova N."/>
            <person name="Richardson P."/>
        </authorList>
    </citation>
    <scope>NUCLEOTIDE SEQUENCE [LARGE SCALE GENOMIC DNA]</scope>
    <source>
        <strain>NCIMB 400</strain>
    </source>
</reference>
<accession>Q089N5</accession>
<proteinExistence type="inferred from homology"/>